<sequence>MRVGVLGVQGSVKEHMDKLKLIKGIEAVEAKDKDTLLTLDALIIPGGESTAIGKILVDFGLKDAILKLNERKVPIWGTCAGMILMAKHIVNDERRHLGIMDITVRRNAYGSQINSFKTRLIIPAISENEIEAVFIRAPYIESVGDGVRILAKYEGKIVAAQQDNLLATAFHPELTDDLSFYRYFLRLNS</sequence>
<comment type="function">
    <text evidence="1">Catalyzes the hydrolysis of glutamine to glutamate and ammonia as part of the biosynthesis of pyridoxal 5'-phosphate. The resulting ammonia molecule is channeled to the active site of PdxS.</text>
</comment>
<comment type="catalytic activity">
    <reaction evidence="1">
        <text>aldehydo-D-ribose 5-phosphate + D-glyceraldehyde 3-phosphate + L-glutamine = pyridoxal 5'-phosphate + L-glutamate + phosphate + 3 H2O + H(+)</text>
        <dbReference type="Rhea" id="RHEA:31507"/>
        <dbReference type="ChEBI" id="CHEBI:15377"/>
        <dbReference type="ChEBI" id="CHEBI:15378"/>
        <dbReference type="ChEBI" id="CHEBI:29985"/>
        <dbReference type="ChEBI" id="CHEBI:43474"/>
        <dbReference type="ChEBI" id="CHEBI:58273"/>
        <dbReference type="ChEBI" id="CHEBI:58359"/>
        <dbReference type="ChEBI" id="CHEBI:59776"/>
        <dbReference type="ChEBI" id="CHEBI:597326"/>
        <dbReference type="EC" id="4.3.3.6"/>
    </reaction>
</comment>
<comment type="catalytic activity">
    <reaction evidence="1">
        <text>L-glutamine + H2O = L-glutamate + NH4(+)</text>
        <dbReference type="Rhea" id="RHEA:15889"/>
        <dbReference type="ChEBI" id="CHEBI:15377"/>
        <dbReference type="ChEBI" id="CHEBI:28938"/>
        <dbReference type="ChEBI" id="CHEBI:29985"/>
        <dbReference type="ChEBI" id="CHEBI:58359"/>
        <dbReference type="EC" id="3.5.1.2"/>
    </reaction>
</comment>
<comment type="pathway">
    <text evidence="1">Cofactor biosynthesis; pyridoxal 5'-phosphate biosynthesis.</text>
</comment>
<comment type="subunit">
    <text evidence="1">In the presence of PdxS, forms a dodecamer of heterodimers. Only shows activity in the heterodimer.</text>
</comment>
<comment type="similarity">
    <text evidence="1">Belongs to the glutaminase PdxT/SNO family.</text>
</comment>
<feature type="chain" id="PRO_0000135672" description="Pyridoxal 5'-phosphate synthase subunit PdxT">
    <location>
        <begin position="1"/>
        <end position="189"/>
    </location>
</feature>
<feature type="active site" description="Nucleophile" evidence="1">
    <location>
        <position position="79"/>
    </location>
</feature>
<feature type="active site" description="Charge relay system" evidence="1">
    <location>
        <position position="171"/>
    </location>
</feature>
<feature type="active site" description="Charge relay system" evidence="1">
    <location>
        <position position="173"/>
    </location>
</feature>
<feature type="binding site" evidence="1">
    <location>
        <begin position="47"/>
        <end position="49"/>
    </location>
    <ligand>
        <name>L-glutamine</name>
        <dbReference type="ChEBI" id="CHEBI:58359"/>
    </ligand>
</feature>
<feature type="binding site" evidence="1">
    <location>
        <position position="106"/>
    </location>
    <ligand>
        <name>L-glutamine</name>
        <dbReference type="ChEBI" id="CHEBI:58359"/>
    </ligand>
</feature>
<feature type="binding site" evidence="1">
    <location>
        <begin position="135"/>
        <end position="136"/>
    </location>
    <ligand>
        <name>L-glutamine</name>
        <dbReference type="ChEBI" id="CHEBI:58359"/>
    </ligand>
</feature>
<organism>
    <name type="scientific">Caldanaerobacter subterraneus subsp. tengcongensis (strain DSM 15242 / JCM 11007 / NBRC 100824 / MB4)</name>
    <name type="common">Thermoanaerobacter tengcongensis</name>
    <dbReference type="NCBI Taxonomy" id="273068"/>
    <lineage>
        <taxon>Bacteria</taxon>
        <taxon>Bacillati</taxon>
        <taxon>Bacillota</taxon>
        <taxon>Clostridia</taxon>
        <taxon>Thermoanaerobacterales</taxon>
        <taxon>Thermoanaerobacteraceae</taxon>
        <taxon>Caldanaerobacter</taxon>
    </lineage>
</organism>
<dbReference type="EC" id="4.3.3.6" evidence="1"/>
<dbReference type="EC" id="3.5.1.2" evidence="1"/>
<dbReference type="EMBL" id="AE008691">
    <property type="protein sequence ID" value="AAM24079.1"/>
    <property type="molecule type" value="Genomic_DNA"/>
</dbReference>
<dbReference type="RefSeq" id="WP_011025215.1">
    <property type="nucleotide sequence ID" value="NC_003869.1"/>
</dbReference>
<dbReference type="SMR" id="Q8RBJ4"/>
<dbReference type="STRING" id="273068.TTE0822"/>
<dbReference type="KEGG" id="tte:TTE0822"/>
<dbReference type="eggNOG" id="COG0311">
    <property type="taxonomic scope" value="Bacteria"/>
</dbReference>
<dbReference type="HOGENOM" id="CLU_069674_2_0_9"/>
<dbReference type="OrthoDB" id="9810320at2"/>
<dbReference type="UniPathway" id="UPA00245"/>
<dbReference type="Proteomes" id="UP000000555">
    <property type="component" value="Chromosome"/>
</dbReference>
<dbReference type="GO" id="GO:0005829">
    <property type="term" value="C:cytosol"/>
    <property type="evidence" value="ECO:0007669"/>
    <property type="project" value="TreeGrafter"/>
</dbReference>
<dbReference type="GO" id="GO:1903600">
    <property type="term" value="C:glutaminase complex"/>
    <property type="evidence" value="ECO:0007669"/>
    <property type="project" value="TreeGrafter"/>
</dbReference>
<dbReference type="GO" id="GO:0004359">
    <property type="term" value="F:glutaminase activity"/>
    <property type="evidence" value="ECO:0007669"/>
    <property type="project" value="UniProtKB-UniRule"/>
</dbReference>
<dbReference type="GO" id="GO:0036381">
    <property type="term" value="F:pyridoxal 5'-phosphate synthase (glutamine hydrolysing) activity"/>
    <property type="evidence" value="ECO:0007669"/>
    <property type="project" value="UniProtKB-UniRule"/>
</dbReference>
<dbReference type="GO" id="GO:0006543">
    <property type="term" value="P:glutamine catabolic process"/>
    <property type="evidence" value="ECO:0007669"/>
    <property type="project" value="UniProtKB-UniRule"/>
</dbReference>
<dbReference type="GO" id="GO:0042823">
    <property type="term" value="P:pyridoxal phosphate biosynthetic process"/>
    <property type="evidence" value="ECO:0007669"/>
    <property type="project" value="UniProtKB-UniRule"/>
</dbReference>
<dbReference type="GO" id="GO:0008614">
    <property type="term" value="P:pyridoxine metabolic process"/>
    <property type="evidence" value="ECO:0007669"/>
    <property type="project" value="TreeGrafter"/>
</dbReference>
<dbReference type="CDD" id="cd01749">
    <property type="entry name" value="GATase1_PB"/>
    <property type="match status" value="1"/>
</dbReference>
<dbReference type="FunFam" id="3.40.50.880:FF:000010">
    <property type="entry name" value="uncharacterized protein LOC100176842 isoform X2"/>
    <property type="match status" value="1"/>
</dbReference>
<dbReference type="Gene3D" id="3.40.50.880">
    <property type="match status" value="1"/>
</dbReference>
<dbReference type="HAMAP" id="MF_01615">
    <property type="entry name" value="PdxT"/>
    <property type="match status" value="1"/>
</dbReference>
<dbReference type="InterPro" id="IPR029062">
    <property type="entry name" value="Class_I_gatase-like"/>
</dbReference>
<dbReference type="InterPro" id="IPR002161">
    <property type="entry name" value="PdxT/SNO"/>
</dbReference>
<dbReference type="InterPro" id="IPR021196">
    <property type="entry name" value="PdxT/SNO_CS"/>
</dbReference>
<dbReference type="NCBIfam" id="TIGR03800">
    <property type="entry name" value="PLP_synth_Pdx2"/>
    <property type="match status" value="1"/>
</dbReference>
<dbReference type="PANTHER" id="PTHR31559">
    <property type="entry name" value="PYRIDOXAL 5'-PHOSPHATE SYNTHASE SUBUNIT SNO"/>
    <property type="match status" value="1"/>
</dbReference>
<dbReference type="PANTHER" id="PTHR31559:SF0">
    <property type="entry name" value="PYRIDOXAL 5'-PHOSPHATE SYNTHASE SUBUNIT SNO1-RELATED"/>
    <property type="match status" value="1"/>
</dbReference>
<dbReference type="Pfam" id="PF01174">
    <property type="entry name" value="SNO"/>
    <property type="match status" value="1"/>
</dbReference>
<dbReference type="PIRSF" id="PIRSF005639">
    <property type="entry name" value="Glut_amidoT_SNO"/>
    <property type="match status" value="1"/>
</dbReference>
<dbReference type="SUPFAM" id="SSF52317">
    <property type="entry name" value="Class I glutamine amidotransferase-like"/>
    <property type="match status" value="1"/>
</dbReference>
<dbReference type="PROSITE" id="PS01236">
    <property type="entry name" value="PDXT_SNO_1"/>
    <property type="match status" value="1"/>
</dbReference>
<dbReference type="PROSITE" id="PS51130">
    <property type="entry name" value="PDXT_SNO_2"/>
    <property type="match status" value="1"/>
</dbReference>
<accession>Q8RBJ4</accession>
<evidence type="ECO:0000255" key="1">
    <source>
        <dbReference type="HAMAP-Rule" id="MF_01615"/>
    </source>
</evidence>
<protein>
    <recommendedName>
        <fullName evidence="1">Pyridoxal 5'-phosphate synthase subunit PdxT</fullName>
        <ecNumber evidence="1">4.3.3.6</ecNumber>
    </recommendedName>
    <alternativeName>
        <fullName evidence="1">Pdx2</fullName>
    </alternativeName>
    <alternativeName>
        <fullName evidence="1">Pyridoxal 5'-phosphate synthase glutaminase subunit</fullName>
        <ecNumber evidence="1">3.5.1.2</ecNumber>
    </alternativeName>
</protein>
<name>PDXT_CALS4</name>
<gene>
    <name evidence="1" type="primary">pdxT</name>
    <name type="ordered locus">TTE0822</name>
</gene>
<proteinExistence type="inferred from homology"/>
<reference key="1">
    <citation type="journal article" date="2002" name="Genome Res.">
        <title>A complete sequence of the T. tengcongensis genome.</title>
        <authorList>
            <person name="Bao Q."/>
            <person name="Tian Y."/>
            <person name="Li W."/>
            <person name="Xu Z."/>
            <person name="Xuan Z."/>
            <person name="Hu S."/>
            <person name="Dong W."/>
            <person name="Yang J."/>
            <person name="Chen Y."/>
            <person name="Xue Y."/>
            <person name="Xu Y."/>
            <person name="Lai X."/>
            <person name="Huang L."/>
            <person name="Dong X."/>
            <person name="Ma Y."/>
            <person name="Ling L."/>
            <person name="Tan H."/>
            <person name="Chen R."/>
            <person name="Wang J."/>
            <person name="Yu J."/>
            <person name="Yang H."/>
        </authorList>
    </citation>
    <scope>NUCLEOTIDE SEQUENCE [LARGE SCALE GENOMIC DNA]</scope>
    <source>
        <strain>DSM 15242 / JCM 11007 / NBRC 100824 / MB4</strain>
    </source>
</reference>
<keyword id="KW-0315">Glutamine amidotransferase</keyword>
<keyword id="KW-0378">Hydrolase</keyword>
<keyword id="KW-0456">Lyase</keyword>
<keyword id="KW-0663">Pyridoxal phosphate</keyword>
<keyword id="KW-1185">Reference proteome</keyword>